<reference key="1">
    <citation type="journal article" date="1995" name="Microbiology">
        <title>Discovery of a ptsHI operon, which includes a third gene (ptsT), in the thermophile Bacillus stearothermophilus.</title>
        <authorList>
            <person name="Lai X."/>
            <person name="Ingram L.O."/>
        </authorList>
    </citation>
    <scope>NUCLEOTIDE SEQUENCE [GENOMIC DNA]</scope>
    <source>
        <strain>XL-65-6</strain>
    </source>
</reference>
<name>PTHP_GEOSE</name>
<comment type="function">
    <text>General (non sugar-specific) component of the phosphoenolpyruvate-dependent sugar phosphotransferase system (sugar PTS). This major carbohydrate active-transport system catalyzes the phosphorylation of incoming sugar substrates concomitantly with their translocation across the cell membrane. The phosphoryl group from phosphoenolpyruvate (PEP) is transferred to the phosphoryl carrier protein HPr by enzyme I. Phospho-HPr then transfers it to the PTS EIIA domain.</text>
</comment>
<comment type="function">
    <text evidence="1">P-Ser-HPr interacts with the catabolite control protein A (CcpA), forming a complex that binds to DNA at the catabolite response elements cre, operator sites preceding a large number of catabolite-regulated genes. Thus, P-Ser-HPr is a corepressor in carbon catabolite repression (CCR), a mechanism that allows bacteria to coordinate and optimize the utilization of available carbon sources. P-Ser-HPr also plays a role in inducer exclusion, in which it probably interacts with several non-PTS permeases and inhibits their transport activity (By similarity).</text>
</comment>
<comment type="activity regulation">
    <text>Phosphorylation on Ser-46 inhibits the phosphoryl transfer from enzyme I to HPr.</text>
</comment>
<comment type="subcellular location">
    <subcellularLocation>
        <location>Cytoplasm</location>
    </subcellularLocation>
</comment>
<comment type="similarity">
    <text evidence="3">Belongs to the HPr family.</text>
</comment>
<proteinExistence type="evidence at protein level"/>
<dbReference type="EMBL" id="U12340">
    <property type="protein sequence ID" value="AAA86048.1"/>
    <property type="molecule type" value="Genomic_DNA"/>
</dbReference>
<dbReference type="RefSeq" id="WP_011230496.1">
    <property type="nucleotide sequence ID" value="NZ_JARTEQ010000160.1"/>
</dbReference>
<dbReference type="PDB" id="1Y4Y">
    <property type="method" value="X-ray"/>
    <property type="resolution" value="2.00 A"/>
    <property type="chains" value="A/B/C=1-88"/>
</dbReference>
<dbReference type="PDB" id="1Y50">
    <property type="method" value="X-ray"/>
    <property type="resolution" value="2.00 A"/>
    <property type="chains" value="A=1-88"/>
</dbReference>
<dbReference type="PDB" id="1Y51">
    <property type="method" value="X-ray"/>
    <property type="resolution" value="1.65 A"/>
    <property type="chains" value="A/B/C=1-88"/>
</dbReference>
<dbReference type="PDBsum" id="1Y4Y"/>
<dbReference type="PDBsum" id="1Y50"/>
<dbReference type="PDBsum" id="1Y51"/>
<dbReference type="SMR" id="P42013"/>
<dbReference type="EvolutionaryTrace" id="P42013"/>
<dbReference type="GO" id="GO:0005737">
    <property type="term" value="C:cytoplasm"/>
    <property type="evidence" value="ECO:0007669"/>
    <property type="project" value="UniProtKB-SubCell"/>
</dbReference>
<dbReference type="GO" id="GO:0009401">
    <property type="term" value="P:phosphoenolpyruvate-dependent sugar phosphotransferase system"/>
    <property type="evidence" value="ECO:0007669"/>
    <property type="project" value="UniProtKB-KW"/>
</dbReference>
<dbReference type="CDD" id="cd00367">
    <property type="entry name" value="PTS-HPr_like"/>
    <property type="match status" value="1"/>
</dbReference>
<dbReference type="Gene3D" id="3.30.1340.10">
    <property type="entry name" value="HPr-like"/>
    <property type="match status" value="1"/>
</dbReference>
<dbReference type="InterPro" id="IPR050399">
    <property type="entry name" value="HPr"/>
</dbReference>
<dbReference type="InterPro" id="IPR000032">
    <property type="entry name" value="HPr-like"/>
</dbReference>
<dbReference type="InterPro" id="IPR035895">
    <property type="entry name" value="HPr-like_sf"/>
</dbReference>
<dbReference type="InterPro" id="IPR001020">
    <property type="entry name" value="PTS_HPr_His_P_site"/>
</dbReference>
<dbReference type="InterPro" id="IPR002114">
    <property type="entry name" value="PTS_HPr_Ser_P_site"/>
</dbReference>
<dbReference type="NCBIfam" id="NF010352">
    <property type="entry name" value="PRK13780.1"/>
    <property type="match status" value="1"/>
</dbReference>
<dbReference type="NCBIfam" id="TIGR01003">
    <property type="entry name" value="PTS_HPr_family"/>
    <property type="match status" value="1"/>
</dbReference>
<dbReference type="PANTHER" id="PTHR33705">
    <property type="entry name" value="PHOSPHOCARRIER PROTEIN HPR"/>
    <property type="match status" value="1"/>
</dbReference>
<dbReference type="PANTHER" id="PTHR33705:SF2">
    <property type="entry name" value="PHOSPHOCARRIER PROTEIN NPR"/>
    <property type="match status" value="1"/>
</dbReference>
<dbReference type="Pfam" id="PF00381">
    <property type="entry name" value="PTS-HPr"/>
    <property type="match status" value="1"/>
</dbReference>
<dbReference type="PRINTS" id="PR00107">
    <property type="entry name" value="PHOSPHOCPHPR"/>
</dbReference>
<dbReference type="SUPFAM" id="SSF55594">
    <property type="entry name" value="HPr-like"/>
    <property type="match status" value="1"/>
</dbReference>
<dbReference type="PROSITE" id="PS51350">
    <property type="entry name" value="PTS_HPR_DOM"/>
    <property type="match status" value="1"/>
</dbReference>
<dbReference type="PROSITE" id="PS00369">
    <property type="entry name" value="PTS_HPR_HIS"/>
    <property type="match status" value="1"/>
</dbReference>
<dbReference type="PROSITE" id="PS00589">
    <property type="entry name" value="PTS_HPR_SER"/>
    <property type="match status" value="1"/>
</dbReference>
<sequence>MAEKTFKVVSDSGIHARPATILVQTASKFNSEIQLEYNGKTVNLKSIMGVMSLGIPKGATIKITAEGADAAEAMAALTDTLAKEGLAE</sequence>
<accession>P42013</accession>
<gene>
    <name type="primary">ptsH</name>
</gene>
<keyword id="KW-0002">3D-structure</keyword>
<keyword id="KW-0963">Cytoplasm</keyword>
<keyword id="KW-0597">Phosphoprotein</keyword>
<keyword id="KW-0598">Phosphotransferase system</keyword>
<keyword id="KW-0762">Sugar transport</keyword>
<keyword id="KW-0804">Transcription</keyword>
<keyword id="KW-0805">Transcription regulation</keyword>
<keyword id="KW-0813">Transport</keyword>
<feature type="chain" id="PRO_0000107841" description="Phosphocarrier protein HPr">
    <location>
        <begin position="1"/>
        <end position="88"/>
    </location>
</feature>
<feature type="domain" description="HPr" evidence="2">
    <location>
        <begin position="1"/>
        <end position="88"/>
    </location>
</feature>
<feature type="active site" description="Pros-phosphohistidine intermediate" evidence="2">
    <location>
        <position position="15"/>
    </location>
</feature>
<feature type="modified residue" description="Phosphoserine" evidence="1">
    <location>
        <position position="12"/>
    </location>
</feature>
<feature type="modified residue" description="Phosphoserine; by HPrK/P" evidence="2">
    <location>
        <position position="46"/>
    </location>
</feature>
<feature type="strand" evidence="4">
    <location>
        <begin position="3"/>
        <end position="8"/>
    </location>
</feature>
<feature type="helix" evidence="4">
    <location>
        <begin position="16"/>
        <end position="27"/>
    </location>
</feature>
<feature type="strand" evidence="4">
    <location>
        <begin position="29"/>
        <end position="37"/>
    </location>
</feature>
<feature type="strand" evidence="4">
    <location>
        <begin position="40"/>
        <end position="43"/>
    </location>
</feature>
<feature type="helix" evidence="4">
    <location>
        <begin position="47"/>
        <end position="52"/>
    </location>
</feature>
<feature type="strand" evidence="4">
    <location>
        <begin position="60"/>
        <end position="67"/>
    </location>
</feature>
<feature type="helix" evidence="4">
    <location>
        <begin position="70"/>
        <end position="83"/>
    </location>
</feature>
<evidence type="ECO:0000250" key="1"/>
<evidence type="ECO:0000255" key="2">
    <source>
        <dbReference type="PROSITE-ProRule" id="PRU00681"/>
    </source>
</evidence>
<evidence type="ECO:0000305" key="3"/>
<evidence type="ECO:0007829" key="4">
    <source>
        <dbReference type="PDB" id="1Y51"/>
    </source>
</evidence>
<organism>
    <name type="scientific">Geobacillus stearothermophilus</name>
    <name type="common">Bacillus stearothermophilus</name>
    <dbReference type="NCBI Taxonomy" id="1422"/>
    <lineage>
        <taxon>Bacteria</taxon>
        <taxon>Bacillati</taxon>
        <taxon>Bacillota</taxon>
        <taxon>Bacilli</taxon>
        <taxon>Bacillales</taxon>
        <taxon>Anoxybacillaceae</taxon>
        <taxon>Geobacillus</taxon>
    </lineage>
</organism>
<protein>
    <recommendedName>
        <fullName>Phosphocarrier protein HPr</fullName>
    </recommendedName>
    <alternativeName>
        <fullName>Histidine-containing protein</fullName>
    </alternativeName>
</protein>